<protein>
    <recommendedName>
        <fullName evidence="1">UPF0173 metal-dependent hydrolase BAB2_0644</fullName>
    </recommendedName>
</protein>
<evidence type="ECO:0000255" key="1">
    <source>
        <dbReference type="HAMAP-Rule" id="MF_00457"/>
    </source>
</evidence>
<dbReference type="EMBL" id="AM040265">
    <property type="protein sequence ID" value="CAJ12810.1"/>
    <property type="molecule type" value="Genomic_DNA"/>
</dbReference>
<dbReference type="RefSeq" id="WP_002971239.1">
    <property type="nucleotide sequence ID" value="NZ_KN046823.1"/>
</dbReference>
<dbReference type="SMR" id="Q2YKL5"/>
<dbReference type="STRING" id="359391.BAB2_0644"/>
<dbReference type="KEGG" id="bmf:BAB2_0644"/>
<dbReference type="PATRIC" id="fig|359391.11.peg.2826"/>
<dbReference type="HOGENOM" id="CLU_070010_4_0_5"/>
<dbReference type="PhylomeDB" id="Q2YKL5"/>
<dbReference type="Proteomes" id="UP000002719">
    <property type="component" value="Chromosome II"/>
</dbReference>
<dbReference type="GO" id="GO:0016787">
    <property type="term" value="F:hydrolase activity"/>
    <property type="evidence" value="ECO:0007669"/>
    <property type="project" value="UniProtKB-UniRule"/>
</dbReference>
<dbReference type="CDD" id="cd06262">
    <property type="entry name" value="metallo-hydrolase-like_MBL-fold"/>
    <property type="match status" value="1"/>
</dbReference>
<dbReference type="Gene3D" id="3.60.15.10">
    <property type="entry name" value="Ribonuclease Z/Hydroxyacylglutathione hydrolase-like"/>
    <property type="match status" value="1"/>
</dbReference>
<dbReference type="HAMAP" id="MF_00457">
    <property type="entry name" value="UPF0173"/>
    <property type="match status" value="1"/>
</dbReference>
<dbReference type="InterPro" id="IPR001279">
    <property type="entry name" value="Metallo-B-lactamas"/>
</dbReference>
<dbReference type="InterPro" id="IPR036866">
    <property type="entry name" value="RibonucZ/Hydroxyglut_hydro"/>
</dbReference>
<dbReference type="InterPro" id="IPR022877">
    <property type="entry name" value="UPF0173"/>
</dbReference>
<dbReference type="InterPro" id="IPR050114">
    <property type="entry name" value="UPF0173_UPF0282_UlaG_hydrolase"/>
</dbReference>
<dbReference type="NCBIfam" id="NF001911">
    <property type="entry name" value="PRK00685.1"/>
    <property type="match status" value="1"/>
</dbReference>
<dbReference type="PANTHER" id="PTHR43546:SF3">
    <property type="entry name" value="UPF0173 METAL-DEPENDENT HYDROLASE MJ1163"/>
    <property type="match status" value="1"/>
</dbReference>
<dbReference type="PANTHER" id="PTHR43546">
    <property type="entry name" value="UPF0173 METAL-DEPENDENT HYDROLASE MJ1163-RELATED"/>
    <property type="match status" value="1"/>
</dbReference>
<dbReference type="Pfam" id="PF13483">
    <property type="entry name" value="Lactamase_B_3"/>
    <property type="match status" value="1"/>
</dbReference>
<dbReference type="SMART" id="SM00849">
    <property type="entry name" value="Lactamase_B"/>
    <property type="match status" value="1"/>
</dbReference>
<dbReference type="SUPFAM" id="SSF56281">
    <property type="entry name" value="Metallo-hydrolase/oxidoreductase"/>
    <property type="match status" value="1"/>
</dbReference>
<gene>
    <name type="ordered locus">BAB2_0644</name>
</gene>
<comment type="similarity">
    <text evidence="1">Belongs to the UPF0173 family.</text>
</comment>
<proteinExistence type="inferred from homology"/>
<accession>Q2YKL5</accession>
<sequence>MKITWLGHAAFRVETAKAVILIDPFLNGNPGAKGIDFKEATRGVTHIALTHGHGDHVGDTVAIAREHGATVIANADLASWLGSQGVEKLDPGNTGGTLAHEGFTITFVNALHSSAMLTENGVSQALGNPNGLVFHFEDSPTLYHMGDTDIFSDMALINELHQPEIGIVPIGDRFTMGGAVAALACQRYFNFNSVLPCHYASFPIIDRTADKFIAGMADHPATKVLADPAGTVHSFQA</sequence>
<feature type="chain" id="PRO_0000367164" description="UPF0173 metal-dependent hydrolase BAB2_0644">
    <location>
        <begin position="1"/>
        <end position="237"/>
    </location>
</feature>
<keyword id="KW-0378">Hydrolase</keyword>
<keyword id="KW-1185">Reference proteome</keyword>
<name>Y3144_BRUA2</name>
<organism>
    <name type="scientific">Brucella abortus (strain 2308)</name>
    <dbReference type="NCBI Taxonomy" id="359391"/>
    <lineage>
        <taxon>Bacteria</taxon>
        <taxon>Pseudomonadati</taxon>
        <taxon>Pseudomonadota</taxon>
        <taxon>Alphaproteobacteria</taxon>
        <taxon>Hyphomicrobiales</taxon>
        <taxon>Brucellaceae</taxon>
        <taxon>Brucella/Ochrobactrum group</taxon>
        <taxon>Brucella</taxon>
    </lineage>
</organism>
<reference key="1">
    <citation type="journal article" date="2005" name="Infect. Immun.">
        <title>Whole-genome analyses of speciation events in pathogenic Brucellae.</title>
        <authorList>
            <person name="Chain P.S."/>
            <person name="Comerci D.J."/>
            <person name="Tolmasky M.E."/>
            <person name="Larimer F.W."/>
            <person name="Malfatti S.A."/>
            <person name="Vergez L.M."/>
            <person name="Aguero F."/>
            <person name="Land M.L."/>
            <person name="Ugalde R.A."/>
            <person name="Garcia E."/>
        </authorList>
    </citation>
    <scope>NUCLEOTIDE SEQUENCE [LARGE SCALE GENOMIC DNA]</scope>
    <source>
        <strain>2308</strain>
    </source>
</reference>